<protein>
    <recommendedName>
        <fullName evidence="5">Ribosomal protein uL16 3-hydroxylase</fullName>
        <ecNumber evidence="2">1.14.11.47</ecNumber>
    </recommendedName>
    <alternativeName>
        <fullName>Ribosomal oxygenase RoxA</fullName>
        <shortName>ROX</shortName>
    </alternativeName>
</protein>
<keyword id="KW-0002">3D-structure</keyword>
<keyword id="KW-0223">Dioxygenase</keyword>
<keyword id="KW-0408">Iron</keyword>
<keyword id="KW-0479">Metal-binding</keyword>
<keyword id="KW-0560">Oxidoreductase</keyword>
<keyword id="KW-1185">Reference proteome</keyword>
<dbReference type="EC" id="1.14.11.47" evidence="2"/>
<dbReference type="EMBL" id="U00096">
    <property type="protein sequence ID" value="AAC74212.2"/>
    <property type="molecule type" value="Genomic_DNA"/>
</dbReference>
<dbReference type="EMBL" id="AP009048">
    <property type="protein sequence ID" value="BAA35950.1"/>
    <property type="molecule type" value="Genomic_DNA"/>
</dbReference>
<dbReference type="EMBL" id="D90393">
    <property type="status" value="NOT_ANNOTATED_CDS"/>
    <property type="molecule type" value="Genomic_DNA"/>
</dbReference>
<dbReference type="PIR" id="E64857">
    <property type="entry name" value="E64857"/>
</dbReference>
<dbReference type="RefSeq" id="NP_415646.4">
    <property type="nucleotide sequence ID" value="NC_000913.3"/>
</dbReference>
<dbReference type="RefSeq" id="WP_000456506.1">
    <property type="nucleotide sequence ID" value="NZ_SSZK01000010.1"/>
</dbReference>
<dbReference type="PDB" id="4CCL">
    <property type="method" value="X-ray"/>
    <property type="resolution" value="2.60 A"/>
    <property type="chains" value="A/B=1-373"/>
</dbReference>
<dbReference type="PDB" id="4LIT">
    <property type="method" value="X-ray"/>
    <property type="resolution" value="2.40 A"/>
    <property type="chains" value="A=1-373"/>
</dbReference>
<dbReference type="PDB" id="4LIU">
    <property type="method" value="X-ray"/>
    <property type="resolution" value="2.70 A"/>
    <property type="chains" value="A=2-373"/>
</dbReference>
<dbReference type="PDB" id="4LIV">
    <property type="method" value="X-ray"/>
    <property type="resolution" value="2.70 A"/>
    <property type="chains" value="A=1-373"/>
</dbReference>
<dbReference type="PDB" id="4NUB">
    <property type="method" value="X-ray"/>
    <property type="resolution" value="2.70 A"/>
    <property type="chains" value="A=1-373"/>
</dbReference>
<dbReference type="PDBsum" id="4CCL"/>
<dbReference type="PDBsum" id="4LIT"/>
<dbReference type="PDBsum" id="4LIU"/>
<dbReference type="PDBsum" id="4LIV"/>
<dbReference type="PDBsum" id="4NUB"/>
<dbReference type="SMR" id="P27431"/>
<dbReference type="BioGRID" id="4260093">
    <property type="interactions" value="23"/>
</dbReference>
<dbReference type="DIP" id="DIP-11535N"/>
<dbReference type="FunCoup" id="P27431">
    <property type="interactions" value="82"/>
</dbReference>
<dbReference type="IntAct" id="P27431">
    <property type="interactions" value="13"/>
</dbReference>
<dbReference type="STRING" id="511145.b1128"/>
<dbReference type="jPOST" id="P27431"/>
<dbReference type="PaxDb" id="511145-b1128"/>
<dbReference type="EnsemblBacteria" id="AAC74212">
    <property type="protein sequence ID" value="AAC74212"/>
    <property type="gene ID" value="b1128"/>
</dbReference>
<dbReference type="GeneID" id="75203714"/>
<dbReference type="GeneID" id="945391"/>
<dbReference type="KEGG" id="ecj:JW1114"/>
<dbReference type="KEGG" id="eco:b1128"/>
<dbReference type="KEGG" id="ecoc:C3026_06790"/>
<dbReference type="PATRIC" id="fig|511145.12.peg.1175"/>
<dbReference type="EchoBASE" id="EB1400"/>
<dbReference type="eggNOG" id="COG2850">
    <property type="taxonomic scope" value="Bacteria"/>
</dbReference>
<dbReference type="HOGENOM" id="CLU_039125_0_0_6"/>
<dbReference type="InParanoid" id="P27431"/>
<dbReference type="OMA" id="IAEGECM"/>
<dbReference type="OrthoDB" id="9764016at2"/>
<dbReference type="PhylomeDB" id="P27431"/>
<dbReference type="BioCyc" id="EcoCyc:EG11430-MONOMER"/>
<dbReference type="BioCyc" id="MetaCyc:EG11430-MONOMER"/>
<dbReference type="BRENDA" id="1.14.11.47">
    <property type="organism ID" value="2026"/>
</dbReference>
<dbReference type="EvolutionaryTrace" id="P27431"/>
<dbReference type="PRO" id="PR:P27431"/>
<dbReference type="Proteomes" id="UP000000625">
    <property type="component" value="Chromosome"/>
</dbReference>
<dbReference type="GO" id="GO:0016706">
    <property type="term" value="F:2-oxoglutarate-dependent dioxygenase activity"/>
    <property type="evidence" value="ECO:0000314"/>
    <property type="project" value="EcoCyc"/>
</dbReference>
<dbReference type="GO" id="GO:0008198">
    <property type="term" value="F:ferrous iron binding"/>
    <property type="evidence" value="ECO:0000314"/>
    <property type="project" value="EcoCyc"/>
</dbReference>
<dbReference type="GO" id="GO:0042803">
    <property type="term" value="F:protein homodimerization activity"/>
    <property type="evidence" value="ECO:0000314"/>
    <property type="project" value="EcoCyc"/>
</dbReference>
<dbReference type="GO" id="GO:0043687">
    <property type="term" value="P:post-translational protein modification"/>
    <property type="evidence" value="ECO:0000315"/>
    <property type="project" value="EcoCyc"/>
</dbReference>
<dbReference type="FunFam" id="2.60.120.650:FF:000012">
    <property type="entry name" value="Cupin superfamily protein family"/>
    <property type="match status" value="1"/>
</dbReference>
<dbReference type="FunFam" id="3.40.366.30:FF:000001">
    <property type="entry name" value="Cupin superfamily protein family"/>
    <property type="match status" value="1"/>
</dbReference>
<dbReference type="Gene3D" id="3.40.366.30">
    <property type="entry name" value="50S ribosomal protein L16 arginine hydroxylase, Chain A, Domain 2"/>
    <property type="match status" value="1"/>
</dbReference>
<dbReference type="Gene3D" id="2.60.120.650">
    <property type="entry name" value="Cupin"/>
    <property type="match status" value="1"/>
</dbReference>
<dbReference type="InterPro" id="IPR003347">
    <property type="entry name" value="JmjC_dom"/>
</dbReference>
<dbReference type="InterPro" id="IPR039994">
    <property type="entry name" value="NO66-like"/>
</dbReference>
<dbReference type="InterPro" id="IPR046799">
    <property type="entry name" value="ROXA-like_wH"/>
</dbReference>
<dbReference type="PANTHER" id="PTHR13096">
    <property type="entry name" value="MINA53 MYC INDUCED NUCLEAR ANTIGEN"/>
    <property type="match status" value="1"/>
</dbReference>
<dbReference type="PANTHER" id="PTHR13096:SF8">
    <property type="entry name" value="RIBOSOMAL OXYGENASE 1"/>
    <property type="match status" value="1"/>
</dbReference>
<dbReference type="Pfam" id="PF08007">
    <property type="entry name" value="JmjC_2"/>
    <property type="match status" value="1"/>
</dbReference>
<dbReference type="Pfam" id="PF20514">
    <property type="entry name" value="ROXA-like_wH"/>
    <property type="match status" value="1"/>
</dbReference>
<dbReference type="SMART" id="SM00558">
    <property type="entry name" value="JmjC"/>
    <property type="match status" value="1"/>
</dbReference>
<dbReference type="SUPFAM" id="SSF51197">
    <property type="entry name" value="Clavaminate synthase-like"/>
    <property type="match status" value="1"/>
</dbReference>
<dbReference type="PROSITE" id="PS51184">
    <property type="entry name" value="JMJC"/>
    <property type="match status" value="1"/>
</dbReference>
<reference key="1">
    <citation type="journal article" date="1996" name="DNA Res.">
        <title>A 718-kb DNA sequence of the Escherichia coli K-12 genome corresponding to the 12.7-28.0 min region on the linkage map.</title>
        <authorList>
            <person name="Oshima T."/>
            <person name="Aiba H."/>
            <person name="Baba T."/>
            <person name="Fujita K."/>
            <person name="Hayashi K."/>
            <person name="Honjo A."/>
            <person name="Ikemoto K."/>
            <person name="Inada T."/>
            <person name="Itoh T."/>
            <person name="Kajihara M."/>
            <person name="Kanai K."/>
            <person name="Kashimoto K."/>
            <person name="Kimura S."/>
            <person name="Kitagawa M."/>
            <person name="Makino K."/>
            <person name="Masuda S."/>
            <person name="Miki T."/>
            <person name="Mizobuchi K."/>
            <person name="Mori H."/>
            <person name="Motomura K."/>
            <person name="Nakamura Y."/>
            <person name="Nashimoto H."/>
            <person name="Nishio Y."/>
            <person name="Saito N."/>
            <person name="Sampei G."/>
            <person name="Seki Y."/>
            <person name="Tagami H."/>
            <person name="Takemoto K."/>
            <person name="Wada C."/>
            <person name="Yamamoto Y."/>
            <person name="Yano M."/>
            <person name="Horiuchi T."/>
        </authorList>
    </citation>
    <scope>NUCLEOTIDE SEQUENCE [LARGE SCALE GENOMIC DNA]</scope>
    <source>
        <strain>K12 / W3110 / ATCC 27325 / DSM 5911</strain>
    </source>
</reference>
<reference key="2">
    <citation type="journal article" date="1997" name="Science">
        <title>The complete genome sequence of Escherichia coli K-12.</title>
        <authorList>
            <person name="Blattner F.R."/>
            <person name="Plunkett G. III"/>
            <person name="Bloch C.A."/>
            <person name="Perna N.T."/>
            <person name="Burland V."/>
            <person name="Riley M."/>
            <person name="Collado-Vides J."/>
            <person name="Glasner J.D."/>
            <person name="Rode C.K."/>
            <person name="Mayhew G.F."/>
            <person name="Gregor J."/>
            <person name="Davis N.W."/>
            <person name="Kirkpatrick H.A."/>
            <person name="Goeden M.A."/>
            <person name="Rose D.J."/>
            <person name="Mau B."/>
            <person name="Shao Y."/>
        </authorList>
    </citation>
    <scope>NUCLEOTIDE SEQUENCE [LARGE SCALE GENOMIC DNA]</scope>
    <source>
        <strain>K12 / MG1655 / ATCC 47076</strain>
    </source>
</reference>
<reference key="3">
    <citation type="journal article" date="2006" name="Mol. Syst. Biol.">
        <title>Highly accurate genome sequences of Escherichia coli K-12 strains MG1655 and W3110.</title>
        <authorList>
            <person name="Hayashi K."/>
            <person name="Morooka N."/>
            <person name="Yamamoto Y."/>
            <person name="Fujita K."/>
            <person name="Isono K."/>
            <person name="Choi S."/>
            <person name="Ohtsubo E."/>
            <person name="Baba T."/>
            <person name="Wanner B.L."/>
            <person name="Mori H."/>
            <person name="Horiuchi T."/>
        </authorList>
    </citation>
    <scope>NUCLEOTIDE SEQUENCE [LARGE SCALE GENOMIC DNA]</scope>
    <source>
        <strain>K12 / W3110 / ATCC 27325 / DSM 5911</strain>
    </source>
</reference>
<reference key="4">
    <citation type="journal article" date="1992" name="J. Bacteriol.">
        <title>Molecular analysis of the Escherichia coli phoP-phoQ operon.</title>
        <authorList>
            <person name="Kasahara M."/>
            <person name="Nakata A."/>
            <person name="Shinagawa H."/>
        </authorList>
    </citation>
    <scope>NUCLEOTIDE SEQUENCE [GENOMIC DNA] OF 1-280</scope>
    <source>
        <strain>K12</strain>
    </source>
</reference>
<reference key="5">
    <citation type="journal article" date="2012" name="Nat. Chem. Biol.">
        <title>Oxygenase-catalyzed ribosome hydroxylation occurs in prokaryotes and humans.</title>
        <authorList>
            <person name="Ge W."/>
            <person name="Wolf A."/>
            <person name="Feng T."/>
            <person name="Ho C.H."/>
            <person name="Sekirnik R."/>
            <person name="Zayer A."/>
            <person name="Granatino N."/>
            <person name="Cockman M.E."/>
            <person name="Loenarz C."/>
            <person name="Loik N.D."/>
            <person name="Hardy A.P."/>
            <person name="Claridge T.D."/>
            <person name="Hamed R.B."/>
            <person name="Chowdhury R."/>
            <person name="Gong L."/>
            <person name="Robinson C.V."/>
            <person name="Trudgian D.C."/>
            <person name="Jiang M."/>
            <person name="Mackeen M.M."/>
            <person name="McCullagh J.S."/>
            <person name="Gordiyenko Y."/>
            <person name="Thalhammer A."/>
            <person name="Yamamoto A."/>
            <person name="Yang M."/>
            <person name="Liu-Yi P."/>
            <person name="Zhang Z."/>
            <person name="Schmidt-Zachmann M."/>
            <person name="Kessler B.M."/>
            <person name="Ratcliffe P.J."/>
            <person name="Preston G.M."/>
            <person name="Coleman M.L."/>
            <person name="Schofield C.J."/>
        </authorList>
    </citation>
    <scope>FUNCTION</scope>
    <scope>CATALYTIC ACTIVITY</scope>
    <scope>DISRUPTION PHENOTYPE</scope>
    <source>
        <strain>K12</strain>
    </source>
</reference>
<reference key="6">
    <citation type="journal article" date="2014" name="J. Mol. Biol.">
        <title>Structure and functional analysis of YcfD, a novel 2-oxoglutarate/Fe-dependent oxygenase involved in translational regulation in Escherichia coli.</title>
        <authorList>
            <person name="van Staalduinen L.M."/>
            <person name="Novakowski S.K."/>
            <person name="Jia Z."/>
        </authorList>
    </citation>
    <scope>X-RAY CRYSTALLOGRAPHY (2.70 ANGSTROMS) IN COMPLEX WITH IRON</scope>
    <scope>FUNCTION</scope>
    <scope>COFACTOR</scope>
    <scope>SUBUNIT</scope>
    <scope>MUTAGENESIS OF SER-116 AND ARG-140</scope>
    <source>
        <strain>K12</strain>
    </source>
</reference>
<reference key="7">
    <citation type="journal article" date="2014" name="Nature">
        <title>Ribosomal oxygenases are structurally conserved from prokaryotes to humans.</title>
        <authorList>
            <person name="Chowdhury R."/>
            <person name="Sekirnik R."/>
            <person name="Brissett N.C."/>
            <person name="Krojer T."/>
            <person name="Ho C.H."/>
            <person name="Ng S.S."/>
            <person name="Clifton I.J."/>
            <person name="Ge W."/>
            <person name="Kershaw N.J."/>
            <person name="Fox G.C."/>
            <person name="Muniz J.R."/>
            <person name="Vollmar M."/>
            <person name="Phillips C."/>
            <person name="Pilka E.S."/>
            <person name="Kavanagh K.L."/>
            <person name="von Delft F."/>
            <person name="Oppermann U."/>
            <person name="McDonough M.A."/>
            <person name="Doherty A.J."/>
            <person name="Schofield C.J."/>
        </authorList>
    </citation>
    <scope>X-RAY CRYSTALLOGRAPHY (2.40 ANGSTROMS) IN COMPLEXES WITH 2-OXOGLUTARIC ACID AND SUCCINATE</scope>
    <scope>SUBUNIT</scope>
    <scope>MUTAGENESIS OF ILE-211</scope>
</reference>
<proteinExistence type="evidence at protein level"/>
<gene>
    <name type="primary">roxA</name>
    <name type="synonym">ycfD</name>
    <name type="ordered locus">b1128</name>
    <name type="ordered locus">JW1114</name>
</gene>
<feature type="chain" id="PRO_0000168830" description="Ribosomal protein uL16 3-hydroxylase">
    <location>
        <begin position="1"/>
        <end position="373"/>
    </location>
</feature>
<feature type="domain" description="JmjC" evidence="1">
    <location>
        <begin position="92"/>
        <end position="219"/>
    </location>
</feature>
<feature type="binding site" evidence="6">
    <location>
        <position position="114"/>
    </location>
    <ligand>
        <name>substrate</name>
    </ligand>
</feature>
<feature type="binding site" evidence="6">
    <location>
        <begin position="125"/>
        <end position="127"/>
    </location>
    <ligand>
        <name>substrate</name>
    </ligand>
</feature>
<feature type="binding site" evidence="3">
    <location>
        <position position="125"/>
    </location>
    <ligand>
        <name>Fe cation</name>
        <dbReference type="ChEBI" id="CHEBI:24875"/>
        <note>catalytic</note>
    </ligand>
</feature>
<feature type="binding site" evidence="3">
    <location>
        <position position="127"/>
    </location>
    <ligand>
        <name>Fe cation</name>
        <dbReference type="ChEBI" id="CHEBI:24875"/>
        <note>catalytic</note>
    </ligand>
</feature>
<feature type="binding site" evidence="6">
    <location>
        <position position="140"/>
    </location>
    <ligand>
        <name>substrate</name>
    </ligand>
</feature>
<feature type="binding site" evidence="3">
    <location>
        <position position="187"/>
    </location>
    <ligand>
        <name>Fe cation</name>
        <dbReference type="ChEBI" id="CHEBI:24875"/>
        <note>catalytic</note>
    </ligand>
</feature>
<feature type="binding site" evidence="6">
    <location>
        <position position="187"/>
    </location>
    <ligand>
        <name>substrate</name>
    </ligand>
</feature>
<feature type="mutagenesis site" description="Loss of binding of 2-oxoglutarate." evidence="3">
    <original>S</original>
    <variation>A</variation>
    <location>
        <position position="116"/>
    </location>
</feature>
<feature type="mutagenesis site" description="Loss of binding of 2-oxoglutarate." evidence="3">
    <original>R</original>
    <variation>A</variation>
    <location>
        <position position="140"/>
    </location>
</feature>
<feature type="mutagenesis site" description="Blocks dimerization. Loss of activity." evidence="4">
    <original>I</original>
    <variation>R</variation>
    <location>
        <position position="211"/>
    </location>
</feature>
<feature type="helix" evidence="8">
    <location>
        <begin position="9"/>
        <end position="15"/>
    </location>
</feature>
<feature type="turn" evidence="8">
    <location>
        <begin position="16"/>
        <end position="19"/>
    </location>
</feature>
<feature type="strand" evidence="8">
    <location>
        <begin position="22"/>
        <end position="24"/>
    </location>
</feature>
<feature type="strand" evidence="7">
    <location>
        <begin position="27"/>
        <end position="30"/>
    </location>
</feature>
<feature type="helix" evidence="8">
    <location>
        <begin position="37"/>
        <end position="44"/>
    </location>
</feature>
<feature type="strand" evidence="8">
    <location>
        <begin position="51"/>
        <end position="57"/>
    </location>
</feature>
<feature type="strand" evidence="8">
    <location>
        <begin position="60"/>
        <end position="66"/>
    </location>
</feature>
<feature type="strand" evidence="8">
    <location>
        <begin position="76"/>
        <end position="84"/>
    </location>
</feature>
<feature type="helix" evidence="8">
    <location>
        <begin position="86"/>
        <end position="88"/>
    </location>
</feature>
<feature type="helix" evidence="8">
    <location>
        <begin position="91"/>
        <end position="94"/>
    </location>
</feature>
<feature type="helix" evidence="8">
    <location>
        <begin position="95"/>
        <end position="102"/>
    </location>
</feature>
<feature type="helix" evidence="8">
    <location>
        <begin position="105"/>
        <end position="107"/>
    </location>
</feature>
<feature type="strand" evidence="8">
    <location>
        <begin position="108"/>
        <end position="116"/>
    </location>
</feature>
<feature type="strand" evidence="8">
    <location>
        <begin position="131"/>
        <end position="135"/>
    </location>
</feature>
<feature type="strand" evidence="8">
    <location>
        <begin position="137"/>
        <end position="145"/>
    </location>
</feature>
<feature type="strand" evidence="8">
    <location>
        <begin position="167"/>
        <end position="173"/>
    </location>
</feature>
<feature type="strand" evidence="8">
    <location>
        <begin position="178"/>
        <end position="181"/>
    </location>
</feature>
<feature type="strand" evidence="8">
    <location>
        <begin position="187"/>
        <end position="202"/>
    </location>
</feature>
<feature type="helix" evidence="8">
    <location>
        <begin position="207"/>
        <end position="221"/>
    </location>
</feature>
<feature type="helix" evidence="8">
    <location>
        <begin position="244"/>
        <end position="258"/>
    </location>
</feature>
<feature type="helix" evidence="8">
    <location>
        <begin position="261"/>
        <end position="272"/>
    </location>
</feature>
<feature type="helix" evidence="8">
    <location>
        <begin position="290"/>
        <end position="298"/>
    </location>
</feature>
<feature type="strand" evidence="8">
    <location>
        <begin position="303"/>
        <end position="305"/>
    </location>
</feature>
<feature type="strand" evidence="8">
    <location>
        <begin position="311"/>
        <end position="314"/>
    </location>
</feature>
<feature type="strand" evidence="8">
    <location>
        <begin position="317"/>
        <end position="320"/>
    </location>
</feature>
<feature type="strand" evidence="8">
    <location>
        <begin position="323"/>
        <end position="325"/>
    </location>
</feature>
<feature type="helix" evidence="8">
    <location>
        <begin position="330"/>
        <end position="338"/>
    </location>
</feature>
<feature type="strand" evidence="8">
    <location>
        <begin position="340"/>
        <end position="342"/>
    </location>
</feature>
<feature type="helix" evidence="8">
    <location>
        <begin position="344"/>
        <end position="347"/>
    </location>
</feature>
<feature type="helix" evidence="8">
    <location>
        <begin position="348"/>
        <end position="352"/>
    </location>
</feature>
<feature type="helix" evidence="8">
    <location>
        <begin position="354"/>
        <end position="365"/>
    </location>
</feature>
<feature type="strand" evidence="8">
    <location>
        <begin position="368"/>
        <end position="371"/>
    </location>
</feature>
<accession>P27431</accession>
<accession>P75963</accession>
<name>ROXA_ECOLI</name>
<sequence>MEYQLTLNWPDFLERHWQKRPVVLKRGFNNFIDPISPDELAGLAMESEVDSRLVSHQDGKWQVSHGPFESYDHLGETNWSLLVQAVNHWHEPTAALMRPFRELPDWRIDDLMISFSVPGGGVGPHLDQYDVFIIQGTGRRRWRVGEKLQMKQHCPHPDLLQVDPFEAIIDEELEPGDILYIPPGFPHEGYALENAMNYSVGFRAPNTRELISGFADYVLQRELGGNYYSDPDVPPRAHPADVLPQEMDKLREMMLELINQPEHFKQWFGEFISQSRHELDIAPPEPPYQPDEIYDALKQGEVLVRLGGLRVLRIGDDVYANGEKIDSPHRPALDALASNIALTAENFGDALEDPSFLAMLAALVNSGYWFFEG</sequence>
<comment type="function">
    <text evidence="2 3">Growth-regulating oxygenase that catalyzes the hydroxylation of ribosomal protein uL16 on 'Arg-81'.</text>
</comment>
<comment type="catalytic activity">
    <reaction evidence="2">
        <text>L-arginyl-[ribosomal protein uL16] + 2-oxoglutarate + O2 = (3R)-3-hydroxy-L-arginyl-[ribosomal protein uL16] + succinate + CO2</text>
        <dbReference type="Rhea" id="RHEA:41556"/>
        <dbReference type="Rhea" id="RHEA-COMP:10074"/>
        <dbReference type="Rhea" id="RHEA-COMP:10075"/>
        <dbReference type="ChEBI" id="CHEBI:15379"/>
        <dbReference type="ChEBI" id="CHEBI:16526"/>
        <dbReference type="ChEBI" id="CHEBI:16810"/>
        <dbReference type="ChEBI" id="CHEBI:29965"/>
        <dbReference type="ChEBI" id="CHEBI:30031"/>
        <dbReference type="ChEBI" id="CHEBI:78294"/>
        <dbReference type="EC" id="1.14.11.47"/>
    </reaction>
</comment>
<comment type="cofactor">
    <cofactor evidence="3">
        <name>Fe(2+)</name>
        <dbReference type="ChEBI" id="CHEBI:29033"/>
    </cofactor>
    <text evidence="3">Binds 1 Fe(2+) ion per subunit.</text>
</comment>
<comment type="subunit">
    <text evidence="3 4">Homodimer.</text>
</comment>
<comment type="disruption phenotype">
    <text evidence="2">Cells lacking this gene grow similarly as wild-type under standard conditions, but show reduced growth under low nutrient conditions; this result correlates with a bulk protein translation rate that is lower by a factor of three or four in the deletion mutant strain than that in the wild-type. Deletion of this gene also leads to loss of uL16 (Rpl16) hydroxylation.</text>
</comment>
<comment type="similarity">
    <text evidence="5">Belongs to the ROX family. RoxA/YcfD subfamily.</text>
</comment>
<organism>
    <name type="scientific">Escherichia coli (strain K12)</name>
    <dbReference type="NCBI Taxonomy" id="83333"/>
    <lineage>
        <taxon>Bacteria</taxon>
        <taxon>Pseudomonadati</taxon>
        <taxon>Pseudomonadota</taxon>
        <taxon>Gammaproteobacteria</taxon>
        <taxon>Enterobacterales</taxon>
        <taxon>Enterobacteriaceae</taxon>
        <taxon>Escherichia</taxon>
    </lineage>
</organism>
<evidence type="ECO:0000255" key="1">
    <source>
        <dbReference type="PROSITE-ProRule" id="PRU00538"/>
    </source>
</evidence>
<evidence type="ECO:0000269" key="2">
    <source>
    </source>
</evidence>
<evidence type="ECO:0000269" key="3">
    <source>
    </source>
</evidence>
<evidence type="ECO:0000269" key="4">
    <source>
    </source>
</evidence>
<evidence type="ECO:0000305" key="5"/>
<evidence type="ECO:0000305" key="6">
    <source>
    </source>
</evidence>
<evidence type="ECO:0007829" key="7">
    <source>
        <dbReference type="PDB" id="4CCL"/>
    </source>
</evidence>
<evidence type="ECO:0007829" key="8">
    <source>
        <dbReference type="PDB" id="4LIT"/>
    </source>
</evidence>